<comment type="function">
    <text evidence="1">Digests double-stranded RNA. Involved in the processing of primary rRNA transcript to yield the immediate precursors to the large and small rRNAs (23S and 16S). Processes some mRNAs, and tRNAs when they are encoded in the rRNA operon. Processes pre-crRNA and tracrRNA of type II CRISPR loci if present in the organism.</text>
</comment>
<comment type="catalytic activity">
    <reaction evidence="1">
        <text>Endonucleolytic cleavage to 5'-phosphomonoester.</text>
        <dbReference type="EC" id="3.1.26.3"/>
    </reaction>
</comment>
<comment type="cofactor">
    <cofactor evidence="1">
        <name>Mg(2+)</name>
        <dbReference type="ChEBI" id="CHEBI:18420"/>
    </cofactor>
</comment>
<comment type="subunit">
    <text evidence="1">Homodimer.</text>
</comment>
<comment type="subcellular location">
    <subcellularLocation>
        <location evidence="1">Cytoplasm</location>
    </subcellularLocation>
</comment>
<comment type="similarity">
    <text evidence="1">Belongs to the ribonuclease III family.</text>
</comment>
<sequence>MTPPMNKLTSKLGYTFKETELLNLALTHRSANGKHNERLEFLGDSILSFVIADELYRRFPKVNEGDMSRMRATLVRGNTLAELGREFDLGDYLKLGPGELKSGGFRRDSILADAVEAIIGAIYLDSDLETARSIVLEWYHGRLEEIKPGASQKDPKTRLQEFLQGRRKPLPVYTVTNIKGEAHNQEFTVACEVAGMDTPVIGKGTSRRKAEQAAAETALEQLTNG</sequence>
<organism>
    <name type="scientific">Vibrio cholerae serotype O1 (strain ATCC 39315 / El Tor Inaba N16961)</name>
    <dbReference type="NCBI Taxonomy" id="243277"/>
    <lineage>
        <taxon>Bacteria</taxon>
        <taxon>Pseudomonadati</taxon>
        <taxon>Pseudomonadota</taxon>
        <taxon>Gammaproteobacteria</taxon>
        <taxon>Vibrionales</taxon>
        <taxon>Vibrionaceae</taxon>
        <taxon>Vibrio</taxon>
    </lineage>
</organism>
<evidence type="ECO:0000255" key="1">
    <source>
        <dbReference type="HAMAP-Rule" id="MF_00104"/>
    </source>
</evidence>
<protein>
    <recommendedName>
        <fullName evidence="1">Ribonuclease 3</fullName>
        <ecNumber evidence="1">3.1.26.3</ecNumber>
    </recommendedName>
    <alternativeName>
        <fullName evidence="1">Ribonuclease III</fullName>
        <shortName evidence="1">RNase III</shortName>
    </alternativeName>
</protein>
<gene>
    <name evidence="1" type="primary">rnc</name>
    <name type="ordered locus">VC_2461</name>
</gene>
<accession>Q9KPB2</accession>
<proteinExistence type="inferred from homology"/>
<name>RNC_VIBCH</name>
<dbReference type="EC" id="3.1.26.3" evidence="1"/>
<dbReference type="EMBL" id="AE003852">
    <property type="protein sequence ID" value="AAF95603.1"/>
    <property type="molecule type" value="Genomic_DNA"/>
</dbReference>
<dbReference type="PIR" id="B82073">
    <property type="entry name" value="B82073"/>
</dbReference>
<dbReference type="RefSeq" id="NP_232090.1">
    <property type="nucleotide sequence ID" value="NC_002505.1"/>
</dbReference>
<dbReference type="RefSeq" id="WP_001882136.1">
    <property type="nucleotide sequence ID" value="NZ_LT906614.1"/>
</dbReference>
<dbReference type="SMR" id="Q9KPB2"/>
<dbReference type="STRING" id="243277.VC_2461"/>
<dbReference type="DNASU" id="2613003"/>
<dbReference type="EnsemblBacteria" id="AAF95603">
    <property type="protein sequence ID" value="AAF95603"/>
    <property type="gene ID" value="VC_2461"/>
</dbReference>
<dbReference type="KEGG" id="vch:VC_2461"/>
<dbReference type="PATRIC" id="fig|243277.26.peg.2346"/>
<dbReference type="eggNOG" id="COG0571">
    <property type="taxonomic scope" value="Bacteria"/>
</dbReference>
<dbReference type="HOGENOM" id="CLU_000907_1_1_6"/>
<dbReference type="Proteomes" id="UP000000584">
    <property type="component" value="Chromosome 1"/>
</dbReference>
<dbReference type="GO" id="GO:0005829">
    <property type="term" value="C:cytosol"/>
    <property type="evidence" value="ECO:0000318"/>
    <property type="project" value="GO_Central"/>
</dbReference>
<dbReference type="GO" id="GO:0003725">
    <property type="term" value="F:double-stranded RNA binding"/>
    <property type="evidence" value="ECO:0000318"/>
    <property type="project" value="GO_Central"/>
</dbReference>
<dbReference type="GO" id="GO:0046872">
    <property type="term" value="F:metal ion binding"/>
    <property type="evidence" value="ECO:0007669"/>
    <property type="project" value="UniProtKB-KW"/>
</dbReference>
<dbReference type="GO" id="GO:0004525">
    <property type="term" value="F:ribonuclease III activity"/>
    <property type="evidence" value="ECO:0000318"/>
    <property type="project" value="GO_Central"/>
</dbReference>
<dbReference type="GO" id="GO:0019843">
    <property type="term" value="F:rRNA binding"/>
    <property type="evidence" value="ECO:0007669"/>
    <property type="project" value="UniProtKB-KW"/>
</dbReference>
<dbReference type="GO" id="GO:0006397">
    <property type="term" value="P:mRNA processing"/>
    <property type="evidence" value="ECO:0007669"/>
    <property type="project" value="UniProtKB-UniRule"/>
</dbReference>
<dbReference type="GO" id="GO:0010468">
    <property type="term" value="P:regulation of gene expression"/>
    <property type="evidence" value="ECO:0000318"/>
    <property type="project" value="GO_Central"/>
</dbReference>
<dbReference type="GO" id="GO:0006396">
    <property type="term" value="P:RNA processing"/>
    <property type="evidence" value="ECO:0000318"/>
    <property type="project" value="GO_Central"/>
</dbReference>
<dbReference type="GO" id="GO:0006364">
    <property type="term" value="P:rRNA processing"/>
    <property type="evidence" value="ECO:0007669"/>
    <property type="project" value="UniProtKB-UniRule"/>
</dbReference>
<dbReference type="GO" id="GO:0008033">
    <property type="term" value="P:tRNA processing"/>
    <property type="evidence" value="ECO:0007669"/>
    <property type="project" value="UniProtKB-KW"/>
</dbReference>
<dbReference type="CDD" id="cd10845">
    <property type="entry name" value="DSRM_RNAse_III_family"/>
    <property type="match status" value="1"/>
</dbReference>
<dbReference type="CDD" id="cd00593">
    <property type="entry name" value="RIBOc"/>
    <property type="match status" value="1"/>
</dbReference>
<dbReference type="FunFam" id="1.10.1520.10:FF:000001">
    <property type="entry name" value="Ribonuclease 3"/>
    <property type="match status" value="1"/>
</dbReference>
<dbReference type="FunFam" id="3.30.160.20:FF:000003">
    <property type="entry name" value="Ribonuclease 3"/>
    <property type="match status" value="1"/>
</dbReference>
<dbReference type="Gene3D" id="3.30.160.20">
    <property type="match status" value="1"/>
</dbReference>
<dbReference type="Gene3D" id="1.10.1520.10">
    <property type="entry name" value="Ribonuclease III domain"/>
    <property type="match status" value="1"/>
</dbReference>
<dbReference type="HAMAP" id="MF_00104">
    <property type="entry name" value="RNase_III"/>
    <property type="match status" value="1"/>
</dbReference>
<dbReference type="InterPro" id="IPR014720">
    <property type="entry name" value="dsRBD_dom"/>
</dbReference>
<dbReference type="InterPro" id="IPR011907">
    <property type="entry name" value="RNase_III"/>
</dbReference>
<dbReference type="InterPro" id="IPR000999">
    <property type="entry name" value="RNase_III_dom"/>
</dbReference>
<dbReference type="InterPro" id="IPR036389">
    <property type="entry name" value="RNase_III_sf"/>
</dbReference>
<dbReference type="NCBIfam" id="TIGR02191">
    <property type="entry name" value="RNaseIII"/>
    <property type="match status" value="1"/>
</dbReference>
<dbReference type="PANTHER" id="PTHR11207:SF0">
    <property type="entry name" value="RIBONUCLEASE 3"/>
    <property type="match status" value="1"/>
</dbReference>
<dbReference type="PANTHER" id="PTHR11207">
    <property type="entry name" value="RIBONUCLEASE III"/>
    <property type="match status" value="1"/>
</dbReference>
<dbReference type="Pfam" id="PF00035">
    <property type="entry name" value="dsrm"/>
    <property type="match status" value="1"/>
</dbReference>
<dbReference type="Pfam" id="PF14622">
    <property type="entry name" value="Ribonucleas_3_3"/>
    <property type="match status" value="1"/>
</dbReference>
<dbReference type="SMART" id="SM00358">
    <property type="entry name" value="DSRM"/>
    <property type="match status" value="1"/>
</dbReference>
<dbReference type="SMART" id="SM00535">
    <property type="entry name" value="RIBOc"/>
    <property type="match status" value="1"/>
</dbReference>
<dbReference type="SUPFAM" id="SSF54768">
    <property type="entry name" value="dsRNA-binding domain-like"/>
    <property type="match status" value="1"/>
</dbReference>
<dbReference type="SUPFAM" id="SSF69065">
    <property type="entry name" value="RNase III domain-like"/>
    <property type="match status" value="1"/>
</dbReference>
<dbReference type="PROSITE" id="PS50137">
    <property type="entry name" value="DS_RBD"/>
    <property type="match status" value="1"/>
</dbReference>
<dbReference type="PROSITE" id="PS00517">
    <property type="entry name" value="RNASE_3_1"/>
    <property type="match status" value="1"/>
</dbReference>
<dbReference type="PROSITE" id="PS50142">
    <property type="entry name" value="RNASE_3_2"/>
    <property type="match status" value="1"/>
</dbReference>
<feature type="chain" id="PRO_0000180452" description="Ribonuclease 3">
    <location>
        <begin position="1"/>
        <end position="225"/>
    </location>
</feature>
<feature type="domain" description="RNase III" evidence="1">
    <location>
        <begin position="5"/>
        <end position="127"/>
    </location>
</feature>
<feature type="domain" description="DRBM" evidence="1">
    <location>
        <begin position="154"/>
        <end position="224"/>
    </location>
</feature>
<feature type="active site" evidence="1">
    <location>
        <position position="44"/>
    </location>
</feature>
<feature type="active site" evidence="1">
    <location>
        <position position="116"/>
    </location>
</feature>
<feature type="binding site" evidence="1">
    <location>
        <position position="40"/>
    </location>
    <ligand>
        <name>Mg(2+)</name>
        <dbReference type="ChEBI" id="CHEBI:18420"/>
    </ligand>
</feature>
<feature type="binding site" evidence="1">
    <location>
        <position position="113"/>
    </location>
    <ligand>
        <name>Mg(2+)</name>
        <dbReference type="ChEBI" id="CHEBI:18420"/>
    </ligand>
</feature>
<feature type="binding site" evidence="1">
    <location>
        <position position="116"/>
    </location>
    <ligand>
        <name>Mg(2+)</name>
        <dbReference type="ChEBI" id="CHEBI:18420"/>
    </ligand>
</feature>
<keyword id="KW-0963">Cytoplasm</keyword>
<keyword id="KW-0255">Endonuclease</keyword>
<keyword id="KW-0378">Hydrolase</keyword>
<keyword id="KW-0460">Magnesium</keyword>
<keyword id="KW-0479">Metal-binding</keyword>
<keyword id="KW-0507">mRNA processing</keyword>
<keyword id="KW-0540">Nuclease</keyword>
<keyword id="KW-1185">Reference proteome</keyword>
<keyword id="KW-0694">RNA-binding</keyword>
<keyword id="KW-0698">rRNA processing</keyword>
<keyword id="KW-0699">rRNA-binding</keyword>
<keyword id="KW-0819">tRNA processing</keyword>
<reference key="1">
    <citation type="journal article" date="2000" name="Nature">
        <title>DNA sequence of both chromosomes of the cholera pathogen Vibrio cholerae.</title>
        <authorList>
            <person name="Heidelberg J.F."/>
            <person name="Eisen J.A."/>
            <person name="Nelson W.C."/>
            <person name="Clayton R.A."/>
            <person name="Gwinn M.L."/>
            <person name="Dodson R.J."/>
            <person name="Haft D.H."/>
            <person name="Hickey E.K."/>
            <person name="Peterson J.D."/>
            <person name="Umayam L.A."/>
            <person name="Gill S.R."/>
            <person name="Nelson K.E."/>
            <person name="Read T.D."/>
            <person name="Tettelin H."/>
            <person name="Richardson D.L."/>
            <person name="Ermolaeva M.D."/>
            <person name="Vamathevan J.J."/>
            <person name="Bass S."/>
            <person name="Qin H."/>
            <person name="Dragoi I."/>
            <person name="Sellers P."/>
            <person name="McDonald L.A."/>
            <person name="Utterback T.R."/>
            <person name="Fleischmann R.D."/>
            <person name="Nierman W.C."/>
            <person name="White O."/>
            <person name="Salzberg S.L."/>
            <person name="Smith H.O."/>
            <person name="Colwell R.R."/>
            <person name="Mekalanos J.J."/>
            <person name="Venter J.C."/>
            <person name="Fraser C.M."/>
        </authorList>
    </citation>
    <scope>NUCLEOTIDE SEQUENCE [LARGE SCALE GENOMIC DNA]</scope>
    <source>
        <strain>ATCC 39315 / El Tor Inaba N16961</strain>
    </source>
</reference>